<proteinExistence type="inferred from homology"/>
<gene>
    <name evidence="1" type="primary">rplX</name>
    <name type="ordered locus">LPC_3002</name>
</gene>
<feature type="chain" id="PRO_1000052240" description="Large ribosomal subunit protein uL24">
    <location>
        <begin position="1"/>
        <end position="109"/>
    </location>
</feature>
<evidence type="ECO:0000255" key="1">
    <source>
        <dbReference type="HAMAP-Rule" id="MF_01326"/>
    </source>
</evidence>
<evidence type="ECO:0000305" key="2"/>
<reference key="1">
    <citation type="submission" date="2006-11" db="EMBL/GenBank/DDBJ databases">
        <title>Identification and characterization of a new conjugation/ type IVA secretion system (trb/tra) of L. pneumophila Corby localized on a mobile genomic island.</title>
        <authorList>
            <person name="Gloeckner G."/>
            <person name="Albert-Weissenberger C."/>
            <person name="Weinmann E."/>
            <person name="Jacobi S."/>
            <person name="Schunder E."/>
            <person name="Steinert M."/>
            <person name="Buchrieser C."/>
            <person name="Hacker J."/>
            <person name="Heuner K."/>
        </authorList>
    </citation>
    <scope>NUCLEOTIDE SEQUENCE [LARGE SCALE GENOMIC DNA]</scope>
    <source>
        <strain>Corby</strain>
    </source>
</reference>
<sequence length="109" mass="12084">MKRIKSGDEVIVIAGKSKGHIGKVLRVIDDAVVVEGGNLIKKHIKPNPQKPENKGGIITREAPLHVSNVAHYNPVTKKADKVGFKYLESNGVSKKVRYYKSNNEIIDRI</sequence>
<dbReference type="EMBL" id="CP000675">
    <property type="protein sequence ID" value="ABQ56903.1"/>
    <property type="molecule type" value="Genomic_DNA"/>
</dbReference>
<dbReference type="RefSeq" id="WP_011945548.1">
    <property type="nucleotide sequence ID" value="NZ_JAPMSS010000006.1"/>
</dbReference>
<dbReference type="SMR" id="A5IHQ3"/>
<dbReference type="KEGG" id="lpc:LPC_3002"/>
<dbReference type="HOGENOM" id="CLU_093315_2_2_6"/>
<dbReference type="GO" id="GO:1990904">
    <property type="term" value="C:ribonucleoprotein complex"/>
    <property type="evidence" value="ECO:0007669"/>
    <property type="project" value="UniProtKB-KW"/>
</dbReference>
<dbReference type="GO" id="GO:0005840">
    <property type="term" value="C:ribosome"/>
    <property type="evidence" value="ECO:0007669"/>
    <property type="project" value="UniProtKB-KW"/>
</dbReference>
<dbReference type="GO" id="GO:0019843">
    <property type="term" value="F:rRNA binding"/>
    <property type="evidence" value="ECO:0007669"/>
    <property type="project" value="UniProtKB-UniRule"/>
</dbReference>
<dbReference type="GO" id="GO:0003735">
    <property type="term" value="F:structural constituent of ribosome"/>
    <property type="evidence" value="ECO:0007669"/>
    <property type="project" value="InterPro"/>
</dbReference>
<dbReference type="GO" id="GO:0006412">
    <property type="term" value="P:translation"/>
    <property type="evidence" value="ECO:0007669"/>
    <property type="project" value="UniProtKB-UniRule"/>
</dbReference>
<dbReference type="CDD" id="cd06089">
    <property type="entry name" value="KOW_RPL26"/>
    <property type="match status" value="1"/>
</dbReference>
<dbReference type="Gene3D" id="2.30.30.30">
    <property type="match status" value="1"/>
</dbReference>
<dbReference type="HAMAP" id="MF_01326_B">
    <property type="entry name" value="Ribosomal_uL24_B"/>
    <property type="match status" value="1"/>
</dbReference>
<dbReference type="InterPro" id="IPR005824">
    <property type="entry name" value="KOW"/>
</dbReference>
<dbReference type="InterPro" id="IPR014722">
    <property type="entry name" value="Rib_uL2_dom2"/>
</dbReference>
<dbReference type="InterPro" id="IPR003256">
    <property type="entry name" value="Ribosomal_uL24"/>
</dbReference>
<dbReference type="InterPro" id="IPR005825">
    <property type="entry name" value="Ribosomal_uL24_CS"/>
</dbReference>
<dbReference type="InterPro" id="IPR041988">
    <property type="entry name" value="Ribosomal_uL24_KOW"/>
</dbReference>
<dbReference type="InterPro" id="IPR008991">
    <property type="entry name" value="Translation_prot_SH3-like_sf"/>
</dbReference>
<dbReference type="NCBIfam" id="TIGR01079">
    <property type="entry name" value="rplX_bact"/>
    <property type="match status" value="1"/>
</dbReference>
<dbReference type="PANTHER" id="PTHR12903">
    <property type="entry name" value="MITOCHONDRIAL RIBOSOMAL PROTEIN L24"/>
    <property type="match status" value="1"/>
</dbReference>
<dbReference type="Pfam" id="PF00467">
    <property type="entry name" value="KOW"/>
    <property type="match status" value="1"/>
</dbReference>
<dbReference type="Pfam" id="PF17136">
    <property type="entry name" value="ribosomal_L24"/>
    <property type="match status" value="1"/>
</dbReference>
<dbReference type="SMART" id="SM00739">
    <property type="entry name" value="KOW"/>
    <property type="match status" value="1"/>
</dbReference>
<dbReference type="SUPFAM" id="SSF50104">
    <property type="entry name" value="Translation proteins SH3-like domain"/>
    <property type="match status" value="1"/>
</dbReference>
<dbReference type="PROSITE" id="PS01108">
    <property type="entry name" value="RIBOSOMAL_L24"/>
    <property type="match status" value="1"/>
</dbReference>
<name>RL24_LEGPC</name>
<organism>
    <name type="scientific">Legionella pneumophila (strain Corby)</name>
    <dbReference type="NCBI Taxonomy" id="400673"/>
    <lineage>
        <taxon>Bacteria</taxon>
        <taxon>Pseudomonadati</taxon>
        <taxon>Pseudomonadota</taxon>
        <taxon>Gammaproteobacteria</taxon>
        <taxon>Legionellales</taxon>
        <taxon>Legionellaceae</taxon>
        <taxon>Legionella</taxon>
    </lineage>
</organism>
<keyword id="KW-0687">Ribonucleoprotein</keyword>
<keyword id="KW-0689">Ribosomal protein</keyword>
<keyword id="KW-0694">RNA-binding</keyword>
<keyword id="KW-0699">rRNA-binding</keyword>
<accession>A5IHQ3</accession>
<comment type="function">
    <text evidence="1">One of two assembly initiator proteins, it binds directly to the 5'-end of the 23S rRNA, where it nucleates assembly of the 50S subunit.</text>
</comment>
<comment type="function">
    <text evidence="1">One of the proteins that surrounds the polypeptide exit tunnel on the outside of the subunit.</text>
</comment>
<comment type="subunit">
    <text evidence="1">Part of the 50S ribosomal subunit.</text>
</comment>
<comment type="similarity">
    <text evidence="1">Belongs to the universal ribosomal protein uL24 family.</text>
</comment>
<protein>
    <recommendedName>
        <fullName evidence="1">Large ribosomal subunit protein uL24</fullName>
    </recommendedName>
    <alternativeName>
        <fullName evidence="2">50S ribosomal protein L24</fullName>
    </alternativeName>
</protein>